<proteinExistence type="inferred from homology"/>
<evidence type="ECO:0000305" key="1"/>
<sequence>MNANSPPIAPAQPMHFEDLILEQGDLISKKLHLLSMQQFPPNAKKLLRQFSLSEVAQFLGVSQSTLKKLHLEGKGPLPQTSSSGRRSYSAEQMAELRQYLDQHGRSEARNYVPHRRSGEKLQVIAVVNFKGGSGKTTTAAHLAQYMALTGHRVLAVDLDPQASLSSLHGFQPELDMSPSLYEALRYDDQRRSISEIIQPTNFPGLDIVPANLELQEYEYDTPLAMSNKSSNDGKTFFTRISRALSEVNDRYDVVVIDCPPQLGYLTITALTAATSVLITIHPQMLDVMSMGQFLLMLGGILKPIRDVGAAVNLEWYRYLITRYEPTDGPQAQMVGFMQTLFHQFVLKNQMLKSTAVSDAGITKQTLYEVDKSQMTRSTYERAMDSLNAVNAEIVELVHASWGRKVVS</sequence>
<protein>
    <recommendedName>
        <fullName>Putative replication protein A</fullName>
    </recommendedName>
</protein>
<accession>P55393</accession>
<gene>
    <name type="ordered locus">NGR_a00010</name>
    <name type="ORF">y4cK</name>
</gene>
<reference key="1">
    <citation type="journal article" date="1997" name="Nature">
        <title>Molecular basis of symbiosis between Rhizobium and legumes.</title>
        <authorList>
            <person name="Freiberg C.A."/>
            <person name="Fellay R."/>
            <person name="Bairoch A."/>
            <person name="Broughton W.J."/>
            <person name="Rosenthal A."/>
            <person name="Perret X."/>
        </authorList>
    </citation>
    <scope>NUCLEOTIDE SEQUENCE [LARGE SCALE GENOMIC DNA]</scope>
    <source>
        <strain>NBRC 101917 / NGR234</strain>
    </source>
</reference>
<reference key="2">
    <citation type="journal article" date="2009" name="Appl. Environ. Microbiol.">
        <title>Rhizobium sp. strain NGR234 possesses a remarkable number of secretion systems.</title>
        <authorList>
            <person name="Schmeisser C."/>
            <person name="Liesegang H."/>
            <person name="Krysciak D."/>
            <person name="Bakkou N."/>
            <person name="Le Quere A."/>
            <person name="Wollherr A."/>
            <person name="Heinemeyer I."/>
            <person name="Morgenstern B."/>
            <person name="Pommerening-Roeser A."/>
            <person name="Flores M."/>
            <person name="Palacios R."/>
            <person name="Brenner S."/>
            <person name="Gottschalk G."/>
            <person name="Schmitz R.A."/>
            <person name="Broughton W.J."/>
            <person name="Perret X."/>
            <person name="Strittmatter A.W."/>
            <person name="Streit W.R."/>
        </authorList>
    </citation>
    <scope>NUCLEOTIDE SEQUENCE [LARGE SCALE GENOMIC DNA]</scope>
    <source>
        <strain>NBRC 101917 / NGR234</strain>
    </source>
</reference>
<feature type="chain" id="PRO_0000200819" description="Putative replication protein A">
    <location>
        <begin position="1"/>
        <end position="407"/>
    </location>
</feature>
<name>Y4CK_SINFN</name>
<keyword id="KW-0235">DNA replication</keyword>
<keyword id="KW-0614">Plasmid</keyword>
<keyword id="KW-1185">Reference proteome</keyword>
<geneLocation type="plasmid">
    <name>sym pNGR234a</name>
</geneLocation>
<dbReference type="EMBL" id="U00090">
    <property type="protein sequence ID" value="AAB92426.1"/>
    <property type="molecule type" value="Genomic_DNA"/>
</dbReference>
<dbReference type="RefSeq" id="NP_443803.1">
    <property type="nucleotide sequence ID" value="NC_000914.2"/>
</dbReference>
<dbReference type="RefSeq" id="WP_010875046.1">
    <property type="nucleotide sequence ID" value="NC_000914.2"/>
</dbReference>
<dbReference type="SMR" id="P55393"/>
<dbReference type="KEGG" id="rhi:NGR_a00010"/>
<dbReference type="PATRIC" id="fig|394.7.peg.1"/>
<dbReference type="eggNOG" id="COG1192">
    <property type="taxonomic scope" value="Bacteria"/>
</dbReference>
<dbReference type="HOGENOM" id="CLU_037612_9_0_5"/>
<dbReference type="OrthoDB" id="9777757at2"/>
<dbReference type="Proteomes" id="UP000001054">
    <property type="component" value="Plasmid pNGR234a"/>
</dbReference>
<dbReference type="GO" id="GO:0003677">
    <property type="term" value="F:DNA binding"/>
    <property type="evidence" value="ECO:0007669"/>
    <property type="project" value="InterPro"/>
</dbReference>
<dbReference type="GO" id="GO:0006260">
    <property type="term" value="P:DNA replication"/>
    <property type="evidence" value="ECO:0007669"/>
    <property type="project" value="UniProtKB-KW"/>
</dbReference>
<dbReference type="GO" id="GO:0006355">
    <property type="term" value="P:regulation of DNA-templated transcription"/>
    <property type="evidence" value="ECO:0007669"/>
    <property type="project" value="InterPro"/>
</dbReference>
<dbReference type="CDD" id="cd02042">
    <property type="entry name" value="ParAB_family"/>
    <property type="match status" value="1"/>
</dbReference>
<dbReference type="Gene3D" id="1.10.1660.10">
    <property type="match status" value="1"/>
</dbReference>
<dbReference type="Gene3D" id="3.40.50.300">
    <property type="entry name" value="P-loop containing nucleotide triphosphate hydrolases"/>
    <property type="match status" value="1"/>
</dbReference>
<dbReference type="InterPro" id="IPR025669">
    <property type="entry name" value="AAA_dom"/>
</dbReference>
<dbReference type="InterPro" id="IPR009061">
    <property type="entry name" value="DNA-bd_dom_put_sf"/>
</dbReference>
<dbReference type="InterPro" id="IPR050678">
    <property type="entry name" value="DNA_Partitioning_ATPase"/>
</dbReference>
<dbReference type="InterPro" id="IPR000551">
    <property type="entry name" value="MerR-type_HTH_dom"/>
</dbReference>
<dbReference type="InterPro" id="IPR027417">
    <property type="entry name" value="P-loop_NTPase"/>
</dbReference>
<dbReference type="InterPro" id="IPR017818">
    <property type="entry name" value="Plasmid_partition_RepA"/>
</dbReference>
<dbReference type="NCBIfam" id="TIGR03453">
    <property type="entry name" value="partition_RepA"/>
    <property type="match status" value="1"/>
</dbReference>
<dbReference type="NCBIfam" id="NF010443">
    <property type="entry name" value="PRK13869.1"/>
    <property type="match status" value="1"/>
</dbReference>
<dbReference type="PANTHER" id="PTHR13696">
    <property type="entry name" value="P-LOOP CONTAINING NUCLEOSIDE TRIPHOSPHATE HYDROLASE"/>
    <property type="match status" value="1"/>
</dbReference>
<dbReference type="PANTHER" id="PTHR13696:SF52">
    <property type="entry name" value="PARA FAMILY PROTEIN CT_582"/>
    <property type="match status" value="1"/>
</dbReference>
<dbReference type="Pfam" id="PF13614">
    <property type="entry name" value="AAA_31"/>
    <property type="match status" value="1"/>
</dbReference>
<dbReference type="Pfam" id="PF13411">
    <property type="entry name" value="MerR_1"/>
    <property type="match status" value="1"/>
</dbReference>
<dbReference type="SUPFAM" id="SSF52540">
    <property type="entry name" value="P-loop containing nucleoside triphosphate hydrolases"/>
    <property type="match status" value="1"/>
</dbReference>
<dbReference type="SUPFAM" id="SSF46955">
    <property type="entry name" value="Putative DNA-binding domain"/>
    <property type="match status" value="1"/>
</dbReference>
<comment type="similarity">
    <text evidence="1">Belongs to the ParA family.</text>
</comment>
<organism>
    <name type="scientific">Sinorhizobium fredii (strain NBRC 101917 / NGR234)</name>
    <dbReference type="NCBI Taxonomy" id="394"/>
    <lineage>
        <taxon>Bacteria</taxon>
        <taxon>Pseudomonadati</taxon>
        <taxon>Pseudomonadota</taxon>
        <taxon>Alphaproteobacteria</taxon>
        <taxon>Hyphomicrobiales</taxon>
        <taxon>Rhizobiaceae</taxon>
        <taxon>Sinorhizobium/Ensifer group</taxon>
        <taxon>Sinorhizobium</taxon>
    </lineage>
</organism>